<keyword id="KW-0687">Ribonucleoprotein</keyword>
<keyword id="KW-0689">Ribosomal protein</keyword>
<gene>
    <name evidence="1" type="primary">rpmD</name>
    <name type="ordered locus">BCE33L0122</name>
</gene>
<accession>Q63H72</accession>
<name>RL30_BACCZ</name>
<protein>
    <recommendedName>
        <fullName evidence="1">Large ribosomal subunit protein uL30</fullName>
    </recommendedName>
    <alternativeName>
        <fullName evidence="2">50S ribosomal protein L30</fullName>
    </alternativeName>
</protein>
<sequence>MAKKLEITLTRSVIGRPQDQRATVEALGLKKLNSTVVKEETPAILGMINKVSHLVTVKEA</sequence>
<evidence type="ECO:0000255" key="1">
    <source>
        <dbReference type="HAMAP-Rule" id="MF_01371"/>
    </source>
</evidence>
<evidence type="ECO:0000305" key="2"/>
<organism>
    <name type="scientific">Bacillus cereus (strain ZK / E33L)</name>
    <dbReference type="NCBI Taxonomy" id="288681"/>
    <lineage>
        <taxon>Bacteria</taxon>
        <taxon>Bacillati</taxon>
        <taxon>Bacillota</taxon>
        <taxon>Bacilli</taxon>
        <taxon>Bacillales</taxon>
        <taxon>Bacillaceae</taxon>
        <taxon>Bacillus</taxon>
        <taxon>Bacillus cereus group</taxon>
    </lineage>
</organism>
<dbReference type="EMBL" id="CP000001">
    <property type="protein sequence ID" value="AAU20107.1"/>
    <property type="molecule type" value="Genomic_DNA"/>
</dbReference>
<dbReference type="RefSeq" id="WP_001085234.1">
    <property type="nucleotide sequence ID" value="NZ_CP009968.1"/>
</dbReference>
<dbReference type="SMR" id="Q63H72"/>
<dbReference type="GeneID" id="93010925"/>
<dbReference type="KEGG" id="bcz:BCE33L0122"/>
<dbReference type="PATRIC" id="fig|288681.22.peg.29"/>
<dbReference type="Proteomes" id="UP000002612">
    <property type="component" value="Chromosome"/>
</dbReference>
<dbReference type="GO" id="GO:0022625">
    <property type="term" value="C:cytosolic large ribosomal subunit"/>
    <property type="evidence" value="ECO:0007669"/>
    <property type="project" value="TreeGrafter"/>
</dbReference>
<dbReference type="GO" id="GO:0003735">
    <property type="term" value="F:structural constituent of ribosome"/>
    <property type="evidence" value="ECO:0007669"/>
    <property type="project" value="InterPro"/>
</dbReference>
<dbReference type="GO" id="GO:0006412">
    <property type="term" value="P:translation"/>
    <property type="evidence" value="ECO:0007669"/>
    <property type="project" value="UniProtKB-UniRule"/>
</dbReference>
<dbReference type="CDD" id="cd01658">
    <property type="entry name" value="Ribosomal_L30"/>
    <property type="match status" value="1"/>
</dbReference>
<dbReference type="FunFam" id="3.30.1390.20:FF:000001">
    <property type="entry name" value="50S ribosomal protein L30"/>
    <property type="match status" value="1"/>
</dbReference>
<dbReference type="Gene3D" id="3.30.1390.20">
    <property type="entry name" value="Ribosomal protein L30, ferredoxin-like fold domain"/>
    <property type="match status" value="1"/>
</dbReference>
<dbReference type="HAMAP" id="MF_01371_B">
    <property type="entry name" value="Ribosomal_uL30_B"/>
    <property type="match status" value="1"/>
</dbReference>
<dbReference type="InterPro" id="IPR036919">
    <property type="entry name" value="Ribo_uL30_ferredoxin-like_sf"/>
</dbReference>
<dbReference type="InterPro" id="IPR005996">
    <property type="entry name" value="Ribosomal_uL30_bac-type"/>
</dbReference>
<dbReference type="InterPro" id="IPR018038">
    <property type="entry name" value="Ribosomal_uL30_CS"/>
</dbReference>
<dbReference type="InterPro" id="IPR016082">
    <property type="entry name" value="Ribosomal_uL30_ferredoxin-like"/>
</dbReference>
<dbReference type="NCBIfam" id="TIGR01308">
    <property type="entry name" value="rpmD_bact"/>
    <property type="match status" value="1"/>
</dbReference>
<dbReference type="PANTHER" id="PTHR15892:SF2">
    <property type="entry name" value="LARGE RIBOSOMAL SUBUNIT PROTEIN UL30M"/>
    <property type="match status" value="1"/>
</dbReference>
<dbReference type="PANTHER" id="PTHR15892">
    <property type="entry name" value="MITOCHONDRIAL RIBOSOMAL PROTEIN L30"/>
    <property type="match status" value="1"/>
</dbReference>
<dbReference type="Pfam" id="PF00327">
    <property type="entry name" value="Ribosomal_L30"/>
    <property type="match status" value="1"/>
</dbReference>
<dbReference type="PIRSF" id="PIRSF002211">
    <property type="entry name" value="Ribosomal_L30_bac-type"/>
    <property type="match status" value="1"/>
</dbReference>
<dbReference type="SUPFAM" id="SSF55129">
    <property type="entry name" value="Ribosomal protein L30p/L7e"/>
    <property type="match status" value="1"/>
</dbReference>
<dbReference type="PROSITE" id="PS00634">
    <property type="entry name" value="RIBOSOMAL_L30"/>
    <property type="match status" value="1"/>
</dbReference>
<comment type="subunit">
    <text evidence="1">Part of the 50S ribosomal subunit.</text>
</comment>
<comment type="similarity">
    <text evidence="1">Belongs to the universal ribosomal protein uL30 family.</text>
</comment>
<proteinExistence type="inferred from homology"/>
<feature type="chain" id="PRO_0000273743" description="Large ribosomal subunit protein uL30">
    <location>
        <begin position="1"/>
        <end position="60"/>
    </location>
</feature>
<reference key="1">
    <citation type="journal article" date="2006" name="J. Bacteriol.">
        <title>Pathogenomic sequence analysis of Bacillus cereus and Bacillus thuringiensis isolates closely related to Bacillus anthracis.</title>
        <authorList>
            <person name="Han C.S."/>
            <person name="Xie G."/>
            <person name="Challacombe J.F."/>
            <person name="Altherr M.R."/>
            <person name="Bhotika S.S."/>
            <person name="Bruce D."/>
            <person name="Campbell C.S."/>
            <person name="Campbell M.L."/>
            <person name="Chen J."/>
            <person name="Chertkov O."/>
            <person name="Cleland C."/>
            <person name="Dimitrijevic M."/>
            <person name="Doggett N.A."/>
            <person name="Fawcett J.J."/>
            <person name="Glavina T."/>
            <person name="Goodwin L.A."/>
            <person name="Hill K.K."/>
            <person name="Hitchcock P."/>
            <person name="Jackson P.J."/>
            <person name="Keim P."/>
            <person name="Kewalramani A.R."/>
            <person name="Longmire J."/>
            <person name="Lucas S."/>
            <person name="Malfatti S."/>
            <person name="McMurry K."/>
            <person name="Meincke L.J."/>
            <person name="Misra M."/>
            <person name="Moseman B.L."/>
            <person name="Mundt M."/>
            <person name="Munk A.C."/>
            <person name="Okinaka R.T."/>
            <person name="Parson-Quintana B."/>
            <person name="Reilly L.P."/>
            <person name="Richardson P."/>
            <person name="Robinson D.L."/>
            <person name="Rubin E."/>
            <person name="Saunders E."/>
            <person name="Tapia R."/>
            <person name="Tesmer J.G."/>
            <person name="Thayer N."/>
            <person name="Thompson L.S."/>
            <person name="Tice H."/>
            <person name="Ticknor L.O."/>
            <person name="Wills P.L."/>
            <person name="Brettin T.S."/>
            <person name="Gilna P."/>
        </authorList>
    </citation>
    <scope>NUCLEOTIDE SEQUENCE [LARGE SCALE GENOMIC DNA]</scope>
    <source>
        <strain>ZK / E33L</strain>
    </source>
</reference>